<feature type="chain" id="PRO_0000346923" description="Putative uncharacterized transmembrane protein DDB_G0290203">
    <location>
        <begin position="1"/>
        <end position="266"/>
    </location>
</feature>
<feature type="transmembrane region" description="Helical" evidence="1">
    <location>
        <begin position="9"/>
        <end position="29"/>
    </location>
</feature>
<feature type="transmembrane region" description="Helical" evidence="1">
    <location>
        <begin position="79"/>
        <end position="99"/>
    </location>
</feature>
<feature type="transmembrane region" description="Helical" evidence="1">
    <location>
        <begin position="122"/>
        <end position="142"/>
    </location>
</feature>
<feature type="transmembrane region" description="Helical" evidence="1">
    <location>
        <begin position="193"/>
        <end position="213"/>
    </location>
</feature>
<name>Y8777_DICDI</name>
<sequence>MENSNNTNIFIIFLSFLMIVLSITSIELPWQRIFLSGKFLGMKIFDLTVDHELFDSGIYYPTRLNEVWIEITSNSINNGIMTCMGINILSLVIILINPFKRFFKFISDSHYLFIEKILIRSLSVMIVIFYILSTTIGLMLSGTYCQVTKSSFDSTDGSTLSDESCYSLDMFSKSHIQDLVIRSTEVSSKPMKGWYLSIVLLFLSLILAVMVFIRFKRISPKLVDLGYRHYLTNNKSSSNNDTGSEVIGLSSNESDNIATVEIEPLL</sequence>
<proteinExistence type="predicted"/>
<gene>
    <name type="ORF">DDB_G0290203</name>
</gene>
<keyword id="KW-0472">Membrane</keyword>
<keyword id="KW-1185">Reference proteome</keyword>
<keyword id="KW-0812">Transmembrane</keyword>
<keyword id="KW-1133">Transmembrane helix</keyword>
<accession>Q54GE8</accession>
<dbReference type="EMBL" id="AAFI02000161">
    <property type="protein sequence ID" value="EAL62323.1"/>
    <property type="molecule type" value="Genomic_DNA"/>
</dbReference>
<dbReference type="RefSeq" id="XP_635830.1">
    <property type="nucleotide sequence ID" value="XM_630738.1"/>
</dbReference>
<dbReference type="SMR" id="Q54GE8"/>
<dbReference type="PaxDb" id="44689-DDB0188777"/>
<dbReference type="EnsemblProtists" id="EAL62323">
    <property type="protein sequence ID" value="EAL62323"/>
    <property type="gene ID" value="DDB_G0290203"/>
</dbReference>
<dbReference type="GeneID" id="8627538"/>
<dbReference type="KEGG" id="ddi:DDB_G0290203"/>
<dbReference type="dictyBase" id="DDB_G0290203"/>
<dbReference type="VEuPathDB" id="AmoebaDB:DDB_G0290203"/>
<dbReference type="HOGENOM" id="CLU_1047423_0_0_1"/>
<dbReference type="InParanoid" id="Q54GE8"/>
<dbReference type="PRO" id="PR:Q54GE8"/>
<dbReference type="Proteomes" id="UP000002195">
    <property type="component" value="Chromosome 5"/>
</dbReference>
<dbReference type="GO" id="GO:0016020">
    <property type="term" value="C:membrane"/>
    <property type="evidence" value="ECO:0007669"/>
    <property type="project" value="UniProtKB-SubCell"/>
</dbReference>
<reference key="1">
    <citation type="journal article" date="2005" name="Nature">
        <title>The genome of the social amoeba Dictyostelium discoideum.</title>
        <authorList>
            <person name="Eichinger L."/>
            <person name="Pachebat J.A."/>
            <person name="Gloeckner G."/>
            <person name="Rajandream M.A."/>
            <person name="Sucgang R."/>
            <person name="Berriman M."/>
            <person name="Song J."/>
            <person name="Olsen R."/>
            <person name="Szafranski K."/>
            <person name="Xu Q."/>
            <person name="Tunggal B."/>
            <person name="Kummerfeld S."/>
            <person name="Madera M."/>
            <person name="Konfortov B.A."/>
            <person name="Rivero F."/>
            <person name="Bankier A.T."/>
            <person name="Lehmann R."/>
            <person name="Hamlin N."/>
            <person name="Davies R."/>
            <person name="Gaudet P."/>
            <person name="Fey P."/>
            <person name="Pilcher K."/>
            <person name="Chen G."/>
            <person name="Saunders D."/>
            <person name="Sodergren E.J."/>
            <person name="Davis P."/>
            <person name="Kerhornou A."/>
            <person name="Nie X."/>
            <person name="Hall N."/>
            <person name="Anjard C."/>
            <person name="Hemphill L."/>
            <person name="Bason N."/>
            <person name="Farbrother P."/>
            <person name="Desany B."/>
            <person name="Just E."/>
            <person name="Morio T."/>
            <person name="Rost R."/>
            <person name="Churcher C.M."/>
            <person name="Cooper J."/>
            <person name="Haydock S."/>
            <person name="van Driessche N."/>
            <person name="Cronin A."/>
            <person name="Goodhead I."/>
            <person name="Muzny D.M."/>
            <person name="Mourier T."/>
            <person name="Pain A."/>
            <person name="Lu M."/>
            <person name="Harper D."/>
            <person name="Lindsay R."/>
            <person name="Hauser H."/>
            <person name="James K.D."/>
            <person name="Quiles M."/>
            <person name="Madan Babu M."/>
            <person name="Saito T."/>
            <person name="Buchrieser C."/>
            <person name="Wardroper A."/>
            <person name="Felder M."/>
            <person name="Thangavelu M."/>
            <person name="Johnson D."/>
            <person name="Knights A."/>
            <person name="Loulseged H."/>
            <person name="Mungall K.L."/>
            <person name="Oliver K."/>
            <person name="Price C."/>
            <person name="Quail M.A."/>
            <person name="Urushihara H."/>
            <person name="Hernandez J."/>
            <person name="Rabbinowitsch E."/>
            <person name="Steffen D."/>
            <person name="Sanders M."/>
            <person name="Ma J."/>
            <person name="Kohara Y."/>
            <person name="Sharp S."/>
            <person name="Simmonds M.N."/>
            <person name="Spiegler S."/>
            <person name="Tivey A."/>
            <person name="Sugano S."/>
            <person name="White B."/>
            <person name="Walker D."/>
            <person name="Woodward J.R."/>
            <person name="Winckler T."/>
            <person name="Tanaka Y."/>
            <person name="Shaulsky G."/>
            <person name="Schleicher M."/>
            <person name="Weinstock G.M."/>
            <person name="Rosenthal A."/>
            <person name="Cox E.C."/>
            <person name="Chisholm R.L."/>
            <person name="Gibbs R.A."/>
            <person name="Loomis W.F."/>
            <person name="Platzer M."/>
            <person name="Kay R.R."/>
            <person name="Williams J.G."/>
            <person name="Dear P.H."/>
            <person name="Noegel A.A."/>
            <person name="Barrell B.G."/>
            <person name="Kuspa A."/>
        </authorList>
    </citation>
    <scope>NUCLEOTIDE SEQUENCE [LARGE SCALE GENOMIC DNA]</scope>
    <source>
        <strain>AX4</strain>
    </source>
</reference>
<evidence type="ECO:0000255" key="1"/>
<evidence type="ECO:0000305" key="2"/>
<organism>
    <name type="scientific">Dictyostelium discoideum</name>
    <name type="common">Social amoeba</name>
    <dbReference type="NCBI Taxonomy" id="44689"/>
    <lineage>
        <taxon>Eukaryota</taxon>
        <taxon>Amoebozoa</taxon>
        <taxon>Evosea</taxon>
        <taxon>Eumycetozoa</taxon>
        <taxon>Dictyostelia</taxon>
        <taxon>Dictyosteliales</taxon>
        <taxon>Dictyosteliaceae</taxon>
        <taxon>Dictyostelium</taxon>
    </lineage>
</organism>
<protein>
    <recommendedName>
        <fullName>Putative uncharacterized transmembrane protein DDB_G0290203</fullName>
    </recommendedName>
</protein>
<comment type="subcellular location">
    <subcellularLocation>
        <location evidence="2">Membrane</location>
        <topology evidence="2">Multi-pass membrane protein</topology>
    </subcellularLocation>
</comment>